<keyword id="KW-0378">Hydrolase</keyword>
<keyword id="KW-0479">Metal-binding</keyword>
<keyword id="KW-0482">Metalloprotease</keyword>
<keyword id="KW-0645">Protease</keyword>
<keyword id="KW-1185">Reference proteome</keyword>
<keyword id="KW-0862">Zinc</keyword>
<gene>
    <name type="ordered locus">SYNPCC7002_A0220</name>
</gene>
<protein>
    <recommendedName>
        <fullName>UPF0758 protein SYNPCC7002_A0220</fullName>
    </recommendedName>
</protein>
<feature type="chain" id="PRO_1000089869" description="UPF0758 protein SYNPCC7002_A0220">
    <location>
        <begin position="1"/>
        <end position="243"/>
    </location>
</feature>
<feature type="domain" description="MPN" evidence="1">
    <location>
        <begin position="112"/>
        <end position="235"/>
    </location>
</feature>
<feature type="short sequence motif" description="JAMM motif" evidence="1">
    <location>
        <begin position="184"/>
        <end position="197"/>
    </location>
</feature>
<feature type="binding site" evidence="1">
    <location>
        <position position="184"/>
    </location>
    <ligand>
        <name>Zn(2+)</name>
        <dbReference type="ChEBI" id="CHEBI:29105"/>
        <note>catalytic</note>
    </ligand>
</feature>
<feature type="binding site" evidence="1">
    <location>
        <position position="186"/>
    </location>
    <ligand>
        <name>Zn(2+)</name>
        <dbReference type="ChEBI" id="CHEBI:29105"/>
        <note>catalytic</note>
    </ligand>
</feature>
<feature type="binding site" evidence="1">
    <location>
        <position position="197"/>
    </location>
    <ligand>
        <name>Zn(2+)</name>
        <dbReference type="ChEBI" id="CHEBI:29105"/>
        <note>catalytic</note>
    </ligand>
</feature>
<reference key="1">
    <citation type="submission" date="2008-02" db="EMBL/GenBank/DDBJ databases">
        <title>Complete sequence of Synechococcus sp. PCC 7002.</title>
        <authorList>
            <person name="Li T."/>
            <person name="Zhao J."/>
            <person name="Zhao C."/>
            <person name="Liu Z."/>
            <person name="Zhao F."/>
            <person name="Marquardt J."/>
            <person name="Nomura C.T."/>
            <person name="Persson S."/>
            <person name="Detter J.C."/>
            <person name="Richardson P.M."/>
            <person name="Lanz C."/>
            <person name="Schuster S.C."/>
            <person name="Wang J."/>
            <person name="Li S."/>
            <person name="Huang X."/>
            <person name="Cai T."/>
            <person name="Yu Z."/>
            <person name="Luo J."/>
            <person name="Zhao J."/>
            <person name="Bryant D.A."/>
        </authorList>
    </citation>
    <scope>NUCLEOTIDE SEQUENCE [LARGE SCALE GENOMIC DNA]</scope>
    <source>
        <strain>ATCC 27264 / PCC 7002 / PR-6</strain>
    </source>
</reference>
<sequence>MNYSPRIQDIPASERPRERLVAVGAKYLSNAELIAILISTGDRHRNLSAVGLAQFILQTCSQGKRDPFDMLRHTTPQELTSIPGVGLAKAAQILAGIELGKRIFQAKPSEKIIVDSPEAAAIALSNDLMWQDQERFAVLCLDVKNTLIATRVVTIGLATETLAHPREIFREVIKHGATRLIIAHNHPSGNVDPSPEDLQLTERLLQSAQILGIPLLDHLILGRDNFGSLRQKTALWDSYPQPE</sequence>
<accession>B1XM86</accession>
<organism>
    <name type="scientific">Picosynechococcus sp. (strain ATCC 27264 / PCC 7002 / PR-6)</name>
    <name type="common">Agmenellum quadruplicatum</name>
    <dbReference type="NCBI Taxonomy" id="32049"/>
    <lineage>
        <taxon>Bacteria</taxon>
        <taxon>Bacillati</taxon>
        <taxon>Cyanobacteriota</taxon>
        <taxon>Cyanophyceae</taxon>
        <taxon>Oscillatoriophycideae</taxon>
        <taxon>Chroococcales</taxon>
        <taxon>Geminocystaceae</taxon>
        <taxon>Picosynechococcus</taxon>
    </lineage>
</organism>
<evidence type="ECO:0000255" key="1">
    <source>
        <dbReference type="PROSITE-ProRule" id="PRU01182"/>
    </source>
</evidence>
<evidence type="ECO:0000305" key="2"/>
<name>Y220_PICP2</name>
<proteinExistence type="inferred from homology"/>
<comment type="similarity">
    <text evidence="2">Belongs to the UPF0758 family.</text>
</comment>
<dbReference type="EMBL" id="CP000951">
    <property type="protein sequence ID" value="ACA98233.1"/>
    <property type="molecule type" value="Genomic_DNA"/>
</dbReference>
<dbReference type="SMR" id="B1XM86"/>
<dbReference type="STRING" id="32049.SYNPCC7002_A0220"/>
<dbReference type="KEGG" id="syp:SYNPCC7002_A0220"/>
<dbReference type="eggNOG" id="COG2003">
    <property type="taxonomic scope" value="Bacteria"/>
</dbReference>
<dbReference type="HOGENOM" id="CLU_073529_0_2_3"/>
<dbReference type="Proteomes" id="UP000001688">
    <property type="component" value="Chromosome"/>
</dbReference>
<dbReference type="GO" id="GO:0046872">
    <property type="term" value="F:metal ion binding"/>
    <property type="evidence" value="ECO:0007669"/>
    <property type="project" value="UniProtKB-KW"/>
</dbReference>
<dbReference type="GO" id="GO:0008237">
    <property type="term" value="F:metallopeptidase activity"/>
    <property type="evidence" value="ECO:0007669"/>
    <property type="project" value="UniProtKB-KW"/>
</dbReference>
<dbReference type="GO" id="GO:0006508">
    <property type="term" value="P:proteolysis"/>
    <property type="evidence" value="ECO:0007669"/>
    <property type="project" value="UniProtKB-KW"/>
</dbReference>
<dbReference type="CDD" id="cd08071">
    <property type="entry name" value="MPN_DUF2466"/>
    <property type="match status" value="1"/>
</dbReference>
<dbReference type="Gene3D" id="3.40.140.10">
    <property type="entry name" value="Cytidine Deaminase, domain 2"/>
    <property type="match status" value="1"/>
</dbReference>
<dbReference type="InterPro" id="IPR037518">
    <property type="entry name" value="MPN"/>
</dbReference>
<dbReference type="InterPro" id="IPR025657">
    <property type="entry name" value="RadC_JAB"/>
</dbReference>
<dbReference type="InterPro" id="IPR001405">
    <property type="entry name" value="UPF0758"/>
</dbReference>
<dbReference type="InterPro" id="IPR020891">
    <property type="entry name" value="UPF0758_CS"/>
</dbReference>
<dbReference type="InterPro" id="IPR046778">
    <property type="entry name" value="UPF0758_N"/>
</dbReference>
<dbReference type="NCBIfam" id="NF000642">
    <property type="entry name" value="PRK00024.1"/>
    <property type="match status" value="1"/>
</dbReference>
<dbReference type="NCBIfam" id="TIGR00608">
    <property type="entry name" value="radc"/>
    <property type="match status" value="1"/>
</dbReference>
<dbReference type="PANTHER" id="PTHR30471">
    <property type="entry name" value="DNA REPAIR PROTEIN RADC"/>
    <property type="match status" value="1"/>
</dbReference>
<dbReference type="PANTHER" id="PTHR30471:SF3">
    <property type="entry name" value="UPF0758 PROTEIN YEES-RELATED"/>
    <property type="match status" value="1"/>
</dbReference>
<dbReference type="Pfam" id="PF04002">
    <property type="entry name" value="RadC"/>
    <property type="match status" value="1"/>
</dbReference>
<dbReference type="Pfam" id="PF20582">
    <property type="entry name" value="UPF0758_N"/>
    <property type="match status" value="1"/>
</dbReference>
<dbReference type="SUPFAM" id="SSF102712">
    <property type="entry name" value="JAB1/MPN domain"/>
    <property type="match status" value="1"/>
</dbReference>
<dbReference type="PROSITE" id="PS50249">
    <property type="entry name" value="MPN"/>
    <property type="match status" value="1"/>
</dbReference>
<dbReference type="PROSITE" id="PS01302">
    <property type="entry name" value="UPF0758"/>
    <property type="match status" value="1"/>
</dbReference>